<protein>
    <recommendedName>
        <fullName evidence="1">Integration host factor subunit beta</fullName>
        <shortName evidence="1">IHF-beta</shortName>
    </recommendedName>
</protein>
<sequence>MTKSELIERLATQQSHIPAKAVEDAVKEMLEHMASTLAQGERIEIRGFGSFSLHYRAPRTGRNPKTGDKVELEGKYVPHFKPGKELRDRANIYG</sequence>
<accession>B5QZB6</accession>
<evidence type="ECO:0000255" key="1">
    <source>
        <dbReference type="HAMAP-Rule" id="MF_00381"/>
    </source>
</evidence>
<name>IHFB_SALEP</name>
<reference key="1">
    <citation type="journal article" date="2008" name="Genome Res.">
        <title>Comparative genome analysis of Salmonella enteritidis PT4 and Salmonella gallinarum 287/91 provides insights into evolutionary and host adaptation pathways.</title>
        <authorList>
            <person name="Thomson N.R."/>
            <person name="Clayton D.J."/>
            <person name="Windhorst D."/>
            <person name="Vernikos G."/>
            <person name="Davidson S."/>
            <person name="Churcher C."/>
            <person name="Quail M.A."/>
            <person name="Stevens M."/>
            <person name="Jones M.A."/>
            <person name="Watson M."/>
            <person name="Barron A."/>
            <person name="Layton A."/>
            <person name="Pickard D."/>
            <person name="Kingsley R.A."/>
            <person name="Bignell A."/>
            <person name="Clark L."/>
            <person name="Harris B."/>
            <person name="Ormond D."/>
            <person name="Abdellah Z."/>
            <person name="Brooks K."/>
            <person name="Cherevach I."/>
            <person name="Chillingworth T."/>
            <person name="Woodward J."/>
            <person name="Norberczak H."/>
            <person name="Lord A."/>
            <person name="Arrowsmith C."/>
            <person name="Jagels K."/>
            <person name="Moule S."/>
            <person name="Mungall K."/>
            <person name="Saunders M."/>
            <person name="Whitehead S."/>
            <person name="Chabalgoity J.A."/>
            <person name="Maskell D."/>
            <person name="Humphreys T."/>
            <person name="Roberts M."/>
            <person name="Barrow P.A."/>
            <person name="Dougan G."/>
            <person name="Parkhill J."/>
        </authorList>
    </citation>
    <scope>NUCLEOTIDE SEQUENCE [LARGE SCALE GENOMIC DNA]</scope>
    <source>
        <strain>P125109</strain>
    </source>
</reference>
<proteinExistence type="inferred from homology"/>
<comment type="function">
    <text evidence="1">This protein is one of the two subunits of integration host factor, a specific DNA-binding protein that functions in genetic recombination as well as in transcriptional and translational control.</text>
</comment>
<comment type="subunit">
    <text evidence="1">Heterodimer of an alpha and a beta chain.</text>
</comment>
<comment type="similarity">
    <text evidence="1">Belongs to the bacterial histone-like protein family.</text>
</comment>
<organism>
    <name type="scientific">Salmonella enteritidis PT4 (strain P125109)</name>
    <dbReference type="NCBI Taxonomy" id="550537"/>
    <lineage>
        <taxon>Bacteria</taxon>
        <taxon>Pseudomonadati</taxon>
        <taxon>Pseudomonadota</taxon>
        <taxon>Gammaproteobacteria</taxon>
        <taxon>Enterobacterales</taxon>
        <taxon>Enterobacteriaceae</taxon>
        <taxon>Salmonella</taxon>
    </lineage>
</organism>
<dbReference type="EMBL" id="AM933172">
    <property type="protein sequence ID" value="CAR32469.1"/>
    <property type="molecule type" value="Genomic_DNA"/>
</dbReference>
<dbReference type="RefSeq" id="WP_000167332.1">
    <property type="nucleotide sequence ID" value="NC_011294.1"/>
</dbReference>
<dbReference type="SMR" id="B5QZB6"/>
<dbReference type="GeneID" id="84237116"/>
<dbReference type="KEGG" id="set:SEN0886"/>
<dbReference type="HOGENOM" id="CLU_105066_2_0_6"/>
<dbReference type="Proteomes" id="UP000000613">
    <property type="component" value="Chromosome"/>
</dbReference>
<dbReference type="GO" id="GO:0005694">
    <property type="term" value="C:chromosome"/>
    <property type="evidence" value="ECO:0007669"/>
    <property type="project" value="InterPro"/>
</dbReference>
<dbReference type="GO" id="GO:0005829">
    <property type="term" value="C:cytosol"/>
    <property type="evidence" value="ECO:0007669"/>
    <property type="project" value="TreeGrafter"/>
</dbReference>
<dbReference type="GO" id="GO:0003677">
    <property type="term" value="F:DNA binding"/>
    <property type="evidence" value="ECO:0007669"/>
    <property type="project" value="UniProtKB-UniRule"/>
</dbReference>
<dbReference type="GO" id="GO:0030527">
    <property type="term" value="F:structural constituent of chromatin"/>
    <property type="evidence" value="ECO:0007669"/>
    <property type="project" value="InterPro"/>
</dbReference>
<dbReference type="GO" id="GO:0006310">
    <property type="term" value="P:DNA recombination"/>
    <property type="evidence" value="ECO:0007669"/>
    <property type="project" value="UniProtKB-UniRule"/>
</dbReference>
<dbReference type="GO" id="GO:0006355">
    <property type="term" value="P:regulation of DNA-templated transcription"/>
    <property type="evidence" value="ECO:0007669"/>
    <property type="project" value="UniProtKB-UniRule"/>
</dbReference>
<dbReference type="GO" id="GO:0006417">
    <property type="term" value="P:regulation of translation"/>
    <property type="evidence" value="ECO:0007669"/>
    <property type="project" value="UniProtKB-UniRule"/>
</dbReference>
<dbReference type="CDD" id="cd13836">
    <property type="entry name" value="IHF_B"/>
    <property type="match status" value="1"/>
</dbReference>
<dbReference type="FunFam" id="4.10.520.10:FF:000003">
    <property type="entry name" value="Integration host factor subunit beta"/>
    <property type="match status" value="1"/>
</dbReference>
<dbReference type="Gene3D" id="4.10.520.10">
    <property type="entry name" value="IHF-like DNA-binding proteins"/>
    <property type="match status" value="1"/>
</dbReference>
<dbReference type="HAMAP" id="MF_00381">
    <property type="entry name" value="IHF_beta"/>
    <property type="match status" value="1"/>
</dbReference>
<dbReference type="InterPro" id="IPR000119">
    <property type="entry name" value="Hist_DNA-bd"/>
</dbReference>
<dbReference type="InterPro" id="IPR020816">
    <property type="entry name" value="Histone-like_DNA-bd_CS"/>
</dbReference>
<dbReference type="InterPro" id="IPR010992">
    <property type="entry name" value="IHF-like_DNA-bd_dom_sf"/>
</dbReference>
<dbReference type="InterPro" id="IPR005685">
    <property type="entry name" value="IHF_beta"/>
</dbReference>
<dbReference type="NCBIfam" id="TIGR00988">
    <property type="entry name" value="hip"/>
    <property type="match status" value="1"/>
</dbReference>
<dbReference type="NCBIfam" id="NF001222">
    <property type="entry name" value="PRK00199.1"/>
    <property type="match status" value="1"/>
</dbReference>
<dbReference type="PANTHER" id="PTHR33175">
    <property type="entry name" value="DNA-BINDING PROTEIN HU"/>
    <property type="match status" value="1"/>
</dbReference>
<dbReference type="PANTHER" id="PTHR33175:SF5">
    <property type="entry name" value="INTEGRATION HOST FACTOR SUBUNIT BETA"/>
    <property type="match status" value="1"/>
</dbReference>
<dbReference type="Pfam" id="PF00216">
    <property type="entry name" value="Bac_DNA_binding"/>
    <property type="match status" value="1"/>
</dbReference>
<dbReference type="PRINTS" id="PR01727">
    <property type="entry name" value="DNABINDINGHU"/>
</dbReference>
<dbReference type="SMART" id="SM00411">
    <property type="entry name" value="BHL"/>
    <property type="match status" value="1"/>
</dbReference>
<dbReference type="SUPFAM" id="SSF47729">
    <property type="entry name" value="IHF-like DNA-binding proteins"/>
    <property type="match status" value="1"/>
</dbReference>
<dbReference type="PROSITE" id="PS00045">
    <property type="entry name" value="HISTONE_LIKE"/>
    <property type="match status" value="1"/>
</dbReference>
<keyword id="KW-0233">DNA recombination</keyword>
<keyword id="KW-0238">DNA-binding</keyword>
<keyword id="KW-0804">Transcription</keyword>
<keyword id="KW-0805">Transcription regulation</keyword>
<keyword id="KW-0810">Translation regulation</keyword>
<gene>
    <name evidence="1" type="primary">ihfB</name>
    <name evidence="1" type="synonym">himD</name>
    <name type="ordered locus">SEN0886</name>
</gene>
<feature type="chain" id="PRO_1000122237" description="Integration host factor subunit beta">
    <location>
        <begin position="1"/>
        <end position="94"/>
    </location>
</feature>